<proteinExistence type="inferred from homology"/>
<keyword id="KW-0145">Chemotaxis</keyword>
<keyword id="KW-0963">Cytoplasm</keyword>
<keyword id="KW-0378">Hydrolase</keyword>
<keyword id="KW-0597">Phosphoprotein</keyword>
<keyword id="KW-1185">Reference proteome</keyword>
<sequence>MSVALAGSPAINATQYEPLRVMVVDDSVVIRGLISRWIEAEPDMVVAASLRTGLDAVNQVERIKPDIALLDIEMPELDGIAALPQLLAKKRDLIVIMASTLTRRNAEISFKALSLGAADYIPKPETTRESAGAEVFRHDLLQKIRHLGGKVRRRVSAPSASAPMVARVREAAAAPAAPSVASQAALVKRAFGPTAPRVLLIGSSTGGPQALMSLVAEIGPVIDRYPVLITQHMPPTFTTILAEHLMRAARRPAHEGVDGELIKPGRIYLAPGGRHMRVTRQGGQPAIALDDGPAVNFCKPAVDPLFTSAIDVWQGGIMAVVLTGMGSDGMRGGKDIVAAGGSVIAQDEASSVVWGMPGAAANAGICAAVLPLNQIGPKLVRLFSGDRS</sequence>
<reference key="1">
    <citation type="submission" date="2006-01" db="EMBL/GenBank/DDBJ databases">
        <title>Complete sequence of Rhodopseudomonas palustris HaA2.</title>
        <authorList>
            <consortium name="US DOE Joint Genome Institute"/>
            <person name="Copeland A."/>
            <person name="Lucas S."/>
            <person name="Lapidus A."/>
            <person name="Barry K."/>
            <person name="Detter J.C."/>
            <person name="Glavina T."/>
            <person name="Hammon N."/>
            <person name="Israni S."/>
            <person name="Pitluck S."/>
            <person name="Chain P."/>
            <person name="Malfatti S."/>
            <person name="Shin M."/>
            <person name="Vergez L."/>
            <person name="Schmutz J."/>
            <person name="Larimer F."/>
            <person name="Land M."/>
            <person name="Hauser L."/>
            <person name="Pelletier D.A."/>
            <person name="Kyrpides N."/>
            <person name="Anderson I."/>
            <person name="Oda Y."/>
            <person name="Harwood C.S."/>
            <person name="Richardson P."/>
        </authorList>
    </citation>
    <scope>NUCLEOTIDE SEQUENCE [LARGE SCALE GENOMIC DNA]</scope>
    <source>
        <strain>HaA2</strain>
    </source>
</reference>
<feature type="chain" id="PRO_0000264310" description="Protein-glutamate methylesterase/protein-glutamine glutaminase">
    <location>
        <begin position="1"/>
        <end position="388"/>
    </location>
</feature>
<feature type="domain" description="Response regulatory" evidence="1">
    <location>
        <begin position="20"/>
        <end position="138"/>
    </location>
</feature>
<feature type="domain" description="CheB-type methylesterase" evidence="1">
    <location>
        <begin position="193"/>
        <end position="386"/>
    </location>
</feature>
<feature type="active site" evidence="1">
    <location>
        <position position="204"/>
    </location>
</feature>
<feature type="active site" evidence="1">
    <location>
        <position position="232"/>
    </location>
</feature>
<feature type="active site" evidence="1">
    <location>
        <position position="328"/>
    </location>
</feature>
<feature type="modified residue" description="4-aspartylphosphate" evidence="1">
    <location>
        <position position="71"/>
    </location>
</feature>
<dbReference type="EC" id="3.1.1.61" evidence="1"/>
<dbReference type="EC" id="3.5.1.44" evidence="1"/>
<dbReference type="EMBL" id="CP000250">
    <property type="protein sequence ID" value="ABD08610.1"/>
    <property type="molecule type" value="Genomic_DNA"/>
</dbReference>
<dbReference type="RefSeq" id="WP_011442794.1">
    <property type="nucleotide sequence ID" value="NC_007778.1"/>
</dbReference>
<dbReference type="SMR" id="Q2IT50"/>
<dbReference type="STRING" id="316058.RPB_3917"/>
<dbReference type="KEGG" id="rpb:RPB_3917"/>
<dbReference type="eggNOG" id="COG2201">
    <property type="taxonomic scope" value="Bacteria"/>
</dbReference>
<dbReference type="HOGENOM" id="CLU_000445_51_0_5"/>
<dbReference type="OrthoDB" id="9793421at2"/>
<dbReference type="Proteomes" id="UP000008809">
    <property type="component" value="Chromosome"/>
</dbReference>
<dbReference type="GO" id="GO:0005737">
    <property type="term" value="C:cytoplasm"/>
    <property type="evidence" value="ECO:0007669"/>
    <property type="project" value="UniProtKB-SubCell"/>
</dbReference>
<dbReference type="GO" id="GO:0000156">
    <property type="term" value="F:phosphorelay response regulator activity"/>
    <property type="evidence" value="ECO:0007669"/>
    <property type="project" value="InterPro"/>
</dbReference>
<dbReference type="GO" id="GO:0008984">
    <property type="term" value="F:protein-glutamate methylesterase activity"/>
    <property type="evidence" value="ECO:0007669"/>
    <property type="project" value="UniProtKB-UniRule"/>
</dbReference>
<dbReference type="GO" id="GO:0050568">
    <property type="term" value="F:protein-glutamine glutaminase activity"/>
    <property type="evidence" value="ECO:0007669"/>
    <property type="project" value="UniProtKB-UniRule"/>
</dbReference>
<dbReference type="GO" id="GO:0006935">
    <property type="term" value="P:chemotaxis"/>
    <property type="evidence" value="ECO:0007669"/>
    <property type="project" value="UniProtKB-UniRule"/>
</dbReference>
<dbReference type="CDD" id="cd16432">
    <property type="entry name" value="CheB_Rec"/>
    <property type="match status" value="1"/>
</dbReference>
<dbReference type="CDD" id="cd17541">
    <property type="entry name" value="REC_CheB-like"/>
    <property type="match status" value="1"/>
</dbReference>
<dbReference type="Gene3D" id="3.40.50.2300">
    <property type="match status" value="1"/>
</dbReference>
<dbReference type="Gene3D" id="3.40.50.180">
    <property type="entry name" value="Methylesterase CheB, C-terminal domain"/>
    <property type="match status" value="1"/>
</dbReference>
<dbReference type="HAMAP" id="MF_00099">
    <property type="entry name" value="CheB_chemtxs"/>
    <property type="match status" value="1"/>
</dbReference>
<dbReference type="InterPro" id="IPR008248">
    <property type="entry name" value="CheB-like"/>
</dbReference>
<dbReference type="InterPro" id="IPR035909">
    <property type="entry name" value="CheB_C"/>
</dbReference>
<dbReference type="InterPro" id="IPR011006">
    <property type="entry name" value="CheY-like_superfamily"/>
</dbReference>
<dbReference type="InterPro" id="IPR000673">
    <property type="entry name" value="Sig_transdc_resp-reg_Me-estase"/>
</dbReference>
<dbReference type="InterPro" id="IPR001789">
    <property type="entry name" value="Sig_transdc_resp-reg_receiver"/>
</dbReference>
<dbReference type="NCBIfam" id="NF001965">
    <property type="entry name" value="PRK00742.1"/>
    <property type="match status" value="1"/>
</dbReference>
<dbReference type="PANTHER" id="PTHR42872">
    <property type="entry name" value="PROTEIN-GLUTAMATE METHYLESTERASE/PROTEIN-GLUTAMINE GLUTAMINASE"/>
    <property type="match status" value="1"/>
</dbReference>
<dbReference type="PANTHER" id="PTHR42872:SF3">
    <property type="entry name" value="PROTEIN-GLUTAMATE METHYLESTERASE_PROTEIN-GLUTAMINE GLUTAMINASE 1"/>
    <property type="match status" value="1"/>
</dbReference>
<dbReference type="Pfam" id="PF01339">
    <property type="entry name" value="CheB_methylest"/>
    <property type="match status" value="1"/>
</dbReference>
<dbReference type="Pfam" id="PF00072">
    <property type="entry name" value="Response_reg"/>
    <property type="match status" value="1"/>
</dbReference>
<dbReference type="PIRSF" id="PIRSF000876">
    <property type="entry name" value="RR_chemtxs_CheB"/>
    <property type="match status" value="1"/>
</dbReference>
<dbReference type="SMART" id="SM00448">
    <property type="entry name" value="REC"/>
    <property type="match status" value="1"/>
</dbReference>
<dbReference type="SUPFAM" id="SSF52172">
    <property type="entry name" value="CheY-like"/>
    <property type="match status" value="1"/>
</dbReference>
<dbReference type="SUPFAM" id="SSF52738">
    <property type="entry name" value="Methylesterase CheB, C-terminal domain"/>
    <property type="match status" value="1"/>
</dbReference>
<dbReference type="PROSITE" id="PS50122">
    <property type="entry name" value="CHEB"/>
    <property type="match status" value="1"/>
</dbReference>
<dbReference type="PROSITE" id="PS50110">
    <property type="entry name" value="RESPONSE_REGULATORY"/>
    <property type="match status" value="1"/>
</dbReference>
<protein>
    <recommendedName>
        <fullName evidence="1">Protein-glutamate methylesterase/protein-glutamine glutaminase</fullName>
        <ecNumber evidence="1">3.1.1.61</ecNumber>
        <ecNumber evidence="1">3.5.1.44</ecNumber>
    </recommendedName>
</protein>
<organism>
    <name type="scientific">Rhodopseudomonas palustris (strain HaA2)</name>
    <dbReference type="NCBI Taxonomy" id="316058"/>
    <lineage>
        <taxon>Bacteria</taxon>
        <taxon>Pseudomonadati</taxon>
        <taxon>Pseudomonadota</taxon>
        <taxon>Alphaproteobacteria</taxon>
        <taxon>Hyphomicrobiales</taxon>
        <taxon>Nitrobacteraceae</taxon>
        <taxon>Rhodopseudomonas</taxon>
    </lineage>
</organism>
<accession>Q2IT50</accession>
<comment type="function">
    <text evidence="1">Involved in chemotaxis. Part of a chemotaxis signal transduction system that modulates chemotaxis in response to various stimuli. Catalyzes the demethylation of specific methylglutamate residues introduced into the chemoreceptors (methyl-accepting chemotaxis proteins or MCP) by CheR. Also mediates the irreversible deamidation of specific glutamine residues to glutamic acid.</text>
</comment>
<comment type="catalytic activity">
    <reaction evidence="1">
        <text>[protein]-L-glutamate 5-O-methyl ester + H2O = L-glutamyl-[protein] + methanol + H(+)</text>
        <dbReference type="Rhea" id="RHEA:23236"/>
        <dbReference type="Rhea" id="RHEA-COMP:10208"/>
        <dbReference type="Rhea" id="RHEA-COMP:10311"/>
        <dbReference type="ChEBI" id="CHEBI:15377"/>
        <dbReference type="ChEBI" id="CHEBI:15378"/>
        <dbReference type="ChEBI" id="CHEBI:17790"/>
        <dbReference type="ChEBI" id="CHEBI:29973"/>
        <dbReference type="ChEBI" id="CHEBI:82795"/>
        <dbReference type="EC" id="3.1.1.61"/>
    </reaction>
</comment>
<comment type="catalytic activity">
    <reaction evidence="1">
        <text>L-glutaminyl-[protein] + H2O = L-glutamyl-[protein] + NH4(+)</text>
        <dbReference type="Rhea" id="RHEA:16441"/>
        <dbReference type="Rhea" id="RHEA-COMP:10207"/>
        <dbReference type="Rhea" id="RHEA-COMP:10208"/>
        <dbReference type="ChEBI" id="CHEBI:15377"/>
        <dbReference type="ChEBI" id="CHEBI:28938"/>
        <dbReference type="ChEBI" id="CHEBI:29973"/>
        <dbReference type="ChEBI" id="CHEBI:30011"/>
        <dbReference type="EC" id="3.5.1.44"/>
    </reaction>
</comment>
<comment type="subcellular location">
    <subcellularLocation>
        <location evidence="1">Cytoplasm</location>
    </subcellularLocation>
</comment>
<comment type="domain">
    <text evidence="1">Contains a C-terminal catalytic domain, and an N-terminal region which modulates catalytic activity.</text>
</comment>
<comment type="PTM">
    <text evidence="1">Phosphorylated by CheA. Phosphorylation of the N-terminal regulatory domain activates the methylesterase activity.</text>
</comment>
<comment type="similarity">
    <text evidence="1">Belongs to the CheB family.</text>
</comment>
<name>CHEB_RHOP2</name>
<evidence type="ECO:0000255" key="1">
    <source>
        <dbReference type="HAMAP-Rule" id="MF_00099"/>
    </source>
</evidence>
<gene>
    <name evidence="1" type="primary">cheB</name>
    <name type="ordered locus">RPB_3917</name>
</gene>